<comment type="similarity">
    <text evidence="1">Belongs to the universal ribosomal protein uS9 family.</text>
</comment>
<evidence type="ECO:0000255" key="1">
    <source>
        <dbReference type="HAMAP-Rule" id="MF_00532"/>
    </source>
</evidence>
<evidence type="ECO:0000256" key="2">
    <source>
        <dbReference type="SAM" id="MobiDB-lite"/>
    </source>
</evidence>
<evidence type="ECO:0000305" key="3"/>
<sequence length="130" mass="14234">MSQAQYAGTGRRKNAVARVRLVPGTGKITVNKKDVEEYIPHADLRLVINQPFAVTSTVGSYDVFVNVVGGGYAGQSGAIRHGIARALLQVDPDFRDSLKRAGLLTRDSRKVERKKPGLKKARKASQFSKR</sequence>
<keyword id="KW-0687">Ribonucleoprotein</keyword>
<keyword id="KW-0689">Ribosomal protein</keyword>
<organism>
    <name type="scientific">Streptococcus pneumoniae (strain 70585)</name>
    <dbReference type="NCBI Taxonomy" id="488221"/>
    <lineage>
        <taxon>Bacteria</taxon>
        <taxon>Bacillati</taxon>
        <taxon>Bacillota</taxon>
        <taxon>Bacilli</taxon>
        <taxon>Lactobacillales</taxon>
        <taxon>Streptococcaceae</taxon>
        <taxon>Streptococcus</taxon>
    </lineage>
</organism>
<name>RS9_STRP7</name>
<dbReference type="EMBL" id="CP000918">
    <property type="protein sequence ID" value="ACO17710.1"/>
    <property type="molecule type" value="Genomic_DNA"/>
</dbReference>
<dbReference type="RefSeq" id="WP_000075973.1">
    <property type="nucleotide sequence ID" value="NC_012468.1"/>
</dbReference>
<dbReference type="SMR" id="C1CB69"/>
<dbReference type="GeneID" id="93922492"/>
<dbReference type="KEGG" id="snm:SP70585_0354"/>
<dbReference type="HOGENOM" id="CLU_046483_2_1_9"/>
<dbReference type="Proteomes" id="UP000002211">
    <property type="component" value="Chromosome"/>
</dbReference>
<dbReference type="GO" id="GO:0022627">
    <property type="term" value="C:cytosolic small ribosomal subunit"/>
    <property type="evidence" value="ECO:0007669"/>
    <property type="project" value="TreeGrafter"/>
</dbReference>
<dbReference type="GO" id="GO:0003723">
    <property type="term" value="F:RNA binding"/>
    <property type="evidence" value="ECO:0007669"/>
    <property type="project" value="TreeGrafter"/>
</dbReference>
<dbReference type="GO" id="GO:0003735">
    <property type="term" value="F:structural constituent of ribosome"/>
    <property type="evidence" value="ECO:0007669"/>
    <property type="project" value="InterPro"/>
</dbReference>
<dbReference type="GO" id="GO:0006412">
    <property type="term" value="P:translation"/>
    <property type="evidence" value="ECO:0007669"/>
    <property type="project" value="UniProtKB-UniRule"/>
</dbReference>
<dbReference type="FunFam" id="3.30.230.10:FF:000001">
    <property type="entry name" value="30S ribosomal protein S9"/>
    <property type="match status" value="1"/>
</dbReference>
<dbReference type="Gene3D" id="3.30.230.10">
    <property type="match status" value="1"/>
</dbReference>
<dbReference type="HAMAP" id="MF_00532_B">
    <property type="entry name" value="Ribosomal_uS9_B"/>
    <property type="match status" value="1"/>
</dbReference>
<dbReference type="InterPro" id="IPR020568">
    <property type="entry name" value="Ribosomal_Su5_D2-typ_SF"/>
</dbReference>
<dbReference type="InterPro" id="IPR000754">
    <property type="entry name" value="Ribosomal_uS9"/>
</dbReference>
<dbReference type="InterPro" id="IPR023035">
    <property type="entry name" value="Ribosomal_uS9_bac/plastid"/>
</dbReference>
<dbReference type="InterPro" id="IPR020574">
    <property type="entry name" value="Ribosomal_uS9_CS"/>
</dbReference>
<dbReference type="InterPro" id="IPR014721">
    <property type="entry name" value="Ribsml_uS5_D2-typ_fold_subgr"/>
</dbReference>
<dbReference type="NCBIfam" id="NF001099">
    <property type="entry name" value="PRK00132.1"/>
    <property type="match status" value="1"/>
</dbReference>
<dbReference type="PANTHER" id="PTHR21569">
    <property type="entry name" value="RIBOSOMAL PROTEIN S9"/>
    <property type="match status" value="1"/>
</dbReference>
<dbReference type="PANTHER" id="PTHR21569:SF1">
    <property type="entry name" value="SMALL RIBOSOMAL SUBUNIT PROTEIN US9M"/>
    <property type="match status" value="1"/>
</dbReference>
<dbReference type="Pfam" id="PF00380">
    <property type="entry name" value="Ribosomal_S9"/>
    <property type="match status" value="1"/>
</dbReference>
<dbReference type="SUPFAM" id="SSF54211">
    <property type="entry name" value="Ribosomal protein S5 domain 2-like"/>
    <property type="match status" value="1"/>
</dbReference>
<dbReference type="PROSITE" id="PS00360">
    <property type="entry name" value="RIBOSOMAL_S9"/>
    <property type="match status" value="1"/>
</dbReference>
<proteinExistence type="inferred from homology"/>
<feature type="chain" id="PRO_1000146471" description="Small ribosomal subunit protein uS9">
    <location>
        <begin position="1"/>
        <end position="130"/>
    </location>
</feature>
<feature type="region of interest" description="Disordered" evidence="2">
    <location>
        <begin position="106"/>
        <end position="130"/>
    </location>
</feature>
<feature type="compositionally biased region" description="Basic residues" evidence="2">
    <location>
        <begin position="111"/>
        <end position="130"/>
    </location>
</feature>
<gene>
    <name evidence="1" type="primary">rpsI</name>
    <name type="ordered locus">SP70585_0354</name>
</gene>
<reference key="1">
    <citation type="journal article" date="2010" name="Genome Biol.">
        <title>Structure and dynamics of the pan-genome of Streptococcus pneumoniae and closely related species.</title>
        <authorList>
            <person name="Donati C."/>
            <person name="Hiller N.L."/>
            <person name="Tettelin H."/>
            <person name="Muzzi A."/>
            <person name="Croucher N.J."/>
            <person name="Angiuoli S.V."/>
            <person name="Oggioni M."/>
            <person name="Dunning Hotopp J.C."/>
            <person name="Hu F.Z."/>
            <person name="Riley D.R."/>
            <person name="Covacci A."/>
            <person name="Mitchell T.J."/>
            <person name="Bentley S.D."/>
            <person name="Kilian M."/>
            <person name="Ehrlich G.D."/>
            <person name="Rappuoli R."/>
            <person name="Moxon E.R."/>
            <person name="Masignani V."/>
        </authorList>
    </citation>
    <scope>NUCLEOTIDE SEQUENCE [LARGE SCALE GENOMIC DNA]</scope>
    <source>
        <strain>70585</strain>
    </source>
</reference>
<accession>C1CB69</accession>
<protein>
    <recommendedName>
        <fullName evidence="1">Small ribosomal subunit protein uS9</fullName>
    </recommendedName>
    <alternativeName>
        <fullName evidence="3">30S ribosomal protein S9</fullName>
    </alternativeName>
</protein>